<name>EFG_RHOE4</name>
<keyword id="KW-0963">Cytoplasm</keyword>
<keyword id="KW-0251">Elongation factor</keyword>
<keyword id="KW-0342">GTP-binding</keyword>
<keyword id="KW-0547">Nucleotide-binding</keyword>
<keyword id="KW-0648">Protein biosynthesis</keyword>
<sequence>MAQEVLTDLNKVRNIGIMAHIDAGKTTTTERILFYTGVNYKIGETHDGASTTDWMEQEKERGITITSAAVTCFWNNNQINIIDTPGHVDFTVEVERSLRVLDGAVAVFDGKEGVEPQSEQVWRQAAKYDVPRICFVNKMDKMGADFYFTVQTIIDRLGAKPLVLQLPIGAEDDFDGVVDLVEMRAITWRGVVPTGALPTIEEIPADLVEKAAEYREKLLETVAESDEALMEKYFGGEELTVEEIKGAIRKMTVASELYPVICGSAFKNKGVQPMLDAVIDYLPNPLDIGEVVGHKLGDEEVEITRKPSKEEPFSALAFKIAAHPFFGKLTFVRVYSGRIDPGAQVLNATKGKKERIGKLFQMHANKENPVDEAVAGHIYAMIGLKDTTTGDTLCDQASPIVLESMSFPAPVIQVSIEPKTKSDQEKLGVAIQKLAEEDPTFSVELDEETGQTVIGGMGELHLDILVDRMRREFKVEANVGKPQVAYRETITKKVEKHDYTHKKQTGGSGQFAKVIIALEPFVGEDGATYEFENKVSGGRIPREYIPSVDAGAQDAMQYGVLAGYPLVNLKLSLLDGAYHDVDSSEMAFKVAGSQALKEAARKAGPVILEPLMAVEVTTPEEYMGDVIGDLNSRRGQIQAMEERSGARVVKALVPLSEMFGYIGDLRSKTQGRANFSMVFDSYAEVPANVSKEIIAKATGE</sequence>
<proteinExistence type="inferred from homology"/>
<evidence type="ECO:0000255" key="1">
    <source>
        <dbReference type="HAMAP-Rule" id="MF_00054"/>
    </source>
</evidence>
<comment type="function">
    <text evidence="1">Catalyzes the GTP-dependent ribosomal translocation step during translation elongation. During this step, the ribosome changes from the pre-translocational (PRE) to the post-translocational (POST) state as the newly formed A-site-bound peptidyl-tRNA and P-site-bound deacylated tRNA move to the P and E sites, respectively. Catalyzes the coordinated movement of the two tRNA molecules, the mRNA and conformational changes in the ribosome.</text>
</comment>
<comment type="subcellular location">
    <subcellularLocation>
        <location evidence="1">Cytoplasm</location>
    </subcellularLocation>
</comment>
<comment type="similarity">
    <text evidence="1">Belongs to the TRAFAC class translation factor GTPase superfamily. Classic translation factor GTPase family. EF-G/EF-2 subfamily.</text>
</comment>
<protein>
    <recommendedName>
        <fullName evidence="1">Elongation factor G</fullName>
        <shortName evidence="1">EF-G</shortName>
    </recommendedName>
</protein>
<organism>
    <name type="scientific">Rhodococcus erythropolis (strain PR4 / NBRC 100887)</name>
    <dbReference type="NCBI Taxonomy" id="234621"/>
    <lineage>
        <taxon>Bacteria</taxon>
        <taxon>Bacillati</taxon>
        <taxon>Actinomycetota</taxon>
        <taxon>Actinomycetes</taxon>
        <taxon>Mycobacteriales</taxon>
        <taxon>Nocardiaceae</taxon>
        <taxon>Rhodococcus</taxon>
        <taxon>Rhodococcus erythropolis group</taxon>
    </lineage>
</organism>
<dbReference type="EMBL" id="AP008957">
    <property type="protein sequence ID" value="BAH32471.1"/>
    <property type="molecule type" value="Genomic_DNA"/>
</dbReference>
<dbReference type="RefSeq" id="WP_003942073.1">
    <property type="nucleotide sequence ID" value="NC_012490.1"/>
</dbReference>
<dbReference type="SMR" id="C0ZVT6"/>
<dbReference type="GeneID" id="57488097"/>
<dbReference type="KEGG" id="rer:RER_17630"/>
<dbReference type="eggNOG" id="COG0480">
    <property type="taxonomic scope" value="Bacteria"/>
</dbReference>
<dbReference type="HOGENOM" id="CLU_002794_4_1_11"/>
<dbReference type="Proteomes" id="UP000002204">
    <property type="component" value="Chromosome"/>
</dbReference>
<dbReference type="GO" id="GO:0005737">
    <property type="term" value="C:cytoplasm"/>
    <property type="evidence" value="ECO:0007669"/>
    <property type="project" value="UniProtKB-SubCell"/>
</dbReference>
<dbReference type="GO" id="GO:0005525">
    <property type="term" value="F:GTP binding"/>
    <property type="evidence" value="ECO:0007669"/>
    <property type="project" value="UniProtKB-UniRule"/>
</dbReference>
<dbReference type="GO" id="GO:0003924">
    <property type="term" value="F:GTPase activity"/>
    <property type="evidence" value="ECO:0007669"/>
    <property type="project" value="InterPro"/>
</dbReference>
<dbReference type="GO" id="GO:0003746">
    <property type="term" value="F:translation elongation factor activity"/>
    <property type="evidence" value="ECO:0007669"/>
    <property type="project" value="UniProtKB-UniRule"/>
</dbReference>
<dbReference type="GO" id="GO:0032790">
    <property type="term" value="P:ribosome disassembly"/>
    <property type="evidence" value="ECO:0007669"/>
    <property type="project" value="TreeGrafter"/>
</dbReference>
<dbReference type="CDD" id="cd01886">
    <property type="entry name" value="EF-G"/>
    <property type="match status" value="1"/>
</dbReference>
<dbReference type="CDD" id="cd16262">
    <property type="entry name" value="EFG_III"/>
    <property type="match status" value="1"/>
</dbReference>
<dbReference type="CDD" id="cd01434">
    <property type="entry name" value="EFG_mtEFG1_IV"/>
    <property type="match status" value="1"/>
</dbReference>
<dbReference type="CDD" id="cd03713">
    <property type="entry name" value="EFG_mtEFG_C"/>
    <property type="match status" value="1"/>
</dbReference>
<dbReference type="CDD" id="cd04088">
    <property type="entry name" value="EFG_mtEFG_II"/>
    <property type="match status" value="1"/>
</dbReference>
<dbReference type="FunFam" id="2.40.30.10:FF:000006">
    <property type="entry name" value="Elongation factor G"/>
    <property type="match status" value="1"/>
</dbReference>
<dbReference type="FunFam" id="3.30.230.10:FF:000003">
    <property type="entry name" value="Elongation factor G"/>
    <property type="match status" value="1"/>
</dbReference>
<dbReference type="FunFam" id="3.30.70.240:FF:000001">
    <property type="entry name" value="Elongation factor G"/>
    <property type="match status" value="1"/>
</dbReference>
<dbReference type="FunFam" id="3.30.70.870:FF:000001">
    <property type="entry name" value="Elongation factor G"/>
    <property type="match status" value="1"/>
</dbReference>
<dbReference type="FunFam" id="3.40.50.300:FF:000029">
    <property type="entry name" value="Elongation factor G"/>
    <property type="match status" value="1"/>
</dbReference>
<dbReference type="Gene3D" id="3.30.230.10">
    <property type="match status" value="1"/>
</dbReference>
<dbReference type="Gene3D" id="3.30.70.240">
    <property type="match status" value="1"/>
</dbReference>
<dbReference type="Gene3D" id="3.30.70.870">
    <property type="entry name" value="Elongation Factor G (Translational Gtpase), domain 3"/>
    <property type="match status" value="1"/>
</dbReference>
<dbReference type="Gene3D" id="3.40.50.300">
    <property type="entry name" value="P-loop containing nucleotide triphosphate hydrolases"/>
    <property type="match status" value="1"/>
</dbReference>
<dbReference type="Gene3D" id="2.40.30.10">
    <property type="entry name" value="Translation factors"/>
    <property type="match status" value="1"/>
</dbReference>
<dbReference type="HAMAP" id="MF_00054_B">
    <property type="entry name" value="EF_G_EF_2_B"/>
    <property type="match status" value="1"/>
</dbReference>
<dbReference type="InterPro" id="IPR041095">
    <property type="entry name" value="EFG_II"/>
</dbReference>
<dbReference type="InterPro" id="IPR009022">
    <property type="entry name" value="EFG_III"/>
</dbReference>
<dbReference type="InterPro" id="IPR035647">
    <property type="entry name" value="EFG_III/V"/>
</dbReference>
<dbReference type="InterPro" id="IPR047872">
    <property type="entry name" value="EFG_IV"/>
</dbReference>
<dbReference type="InterPro" id="IPR035649">
    <property type="entry name" value="EFG_V"/>
</dbReference>
<dbReference type="InterPro" id="IPR000640">
    <property type="entry name" value="EFG_V-like"/>
</dbReference>
<dbReference type="InterPro" id="IPR004161">
    <property type="entry name" value="EFTu-like_2"/>
</dbReference>
<dbReference type="InterPro" id="IPR031157">
    <property type="entry name" value="G_TR_CS"/>
</dbReference>
<dbReference type="InterPro" id="IPR027417">
    <property type="entry name" value="P-loop_NTPase"/>
</dbReference>
<dbReference type="InterPro" id="IPR020568">
    <property type="entry name" value="Ribosomal_Su5_D2-typ_SF"/>
</dbReference>
<dbReference type="InterPro" id="IPR014721">
    <property type="entry name" value="Ribsml_uS5_D2-typ_fold_subgr"/>
</dbReference>
<dbReference type="InterPro" id="IPR005225">
    <property type="entry name" value="Small_GTP-bd"/>
</dbReference>
<dbReference type="InterPro" id="IPR000795">
    <property type="entry name" value="T_Tr_GTP-bd_dom"/>
</dbReference>
<dbReference type="InterPro" id="IPR009000">
    <property type="entry name" value="Transl_B-barrel_sf"/>
</dbReference>
<dbReference type="InterPro" id="IPR004540">
    <property type="entry name" value="Transl_elong_EFG/EF2"/>
</dbReference>
<dbReference type="InterPro" id="IPR005517">
    <property type="entry name" value="Transl_elong_EFG/EF2_IV"/>
</dbReference>
<dbReference type="NCBIfam" id="TIGR00484">
    <property type="entry name" value="EF-G"/>
    <property type="match status" value="1"/>
</dbReference>
<dbReference type="NCBIfam" id="NF009381">
    <property type="entry name" value="PRK12740.1-5"/>
    <property type="match status" value="1"/>
</dbReference>
<dbReference type="NCBIfam" id="TIGR00231">
    <property type="entry name" value="small_GTP"/>
    <property type="match status" value="1"/>
</dbReference>
<dbReference type="PANTHER" id="PTHR43261:SF1">
    <property type="entry name" value="RIBOSOME-RELEASING FACTOR 2, MITOCHONDRIAL"/>
    <property type="match status" value="1"/>
</dbReference>
<dbReference type="PANTHER" id="PTHR43261">
    <property type="entry name" value="TRANSLATION ELONGATION FACTOR G-RELATED"/>
    <property type="match status" value="1"/>
</dbReference>
<dbReference type="Pfam" id="PF00679">
    <property type="entry name" value="EFG_C"/>
    <property type="match status" value="1"/>
</dbReference>
<dbReference type="Pfam" id="PF14492">
    <property type="entry name" value="EFG_III"/>
    <property type="match status" value="1"/>
</dbReference>
<dbReference type="Pfam" id="PF03764">
    <property type="entry name" value="EFG_IV"/>
    <property type="match status" value="1"/>
</dbReference>
<dbReference type="Pfam" id="PF00009">
    <property type="entry name" value="GTP_EFTU"/>
    <property type="match status" value="1"/>
</dbReference>
<dbReference type="Pfam" id="PF03144">
    <property type="entry name" value="GTP_EFTU_D2"/>
    <property type="match status" value="1"/>
</dbReference>
<dbReference type="PRINTS" id="PR00315">
    <property type="entry name" value="ELONGATNFCT"/>
</dbReference>
<dbReference type="SMART" id="SM00838">
    <property type="entry name" value="EFG_C"/>
    <property type="match status" value="1"/>
</dbReference>
<dbReference type="SMART" id="SM00889">
    <property type="entry name" value="EFG_IV"/>
    <property type="match status" value="1"/>
</dbReference>
<dbReference type="SUPFAM" id="SSF54980">
    <property type="entry name" value="EF-G C-terminal domain-like"/>
    <property type="match status" value="2"/>
</dbReference>
<dbReference type="SUPFAM" id="SSF52540">
    <property type="entry name" value="P-loop containing nucleoside triphosphate hydrolases"/>
    <property type="match status" value="1"/>
</dbReference>
<dbReference type="SUPFAM" id="SSF54211">
    <property type="entry name" value="Ribosomal protein S5 domain 2-like"/>
    <property type="match status" value="1"/>
</dbReference>
<dbReference type="SUPFAM" id="SSF50447">
    <property type="entry name" value="Translation proteins"/>
    <property type="match status" value="1"/>
</dbReference>
<dbReference type="PROSITE" id="PS00301">
    <property type="entry name" value="G_TR_1"/>
    <property type="match status" value="1"/>
</dbReference>
<dbReference type="PROSITE" id="PS51722">
    <property type="entry name" value="G_TR_2"/>
    <property type="match status" value="1"/>
</dbReference>
<reference key="1">
    <citation type="submission" date="2005-03" db="EMBL/GenBank/DDBJ databases">
        <title>Comparison of the complete genome sequences of Rhodococcus erythropolis PR4 and Rhodococcus opacus B4.</title>
        <authorList>
            <person name="Takarada H."/>
            <person name="Sekine M."/>
            <person name="Hosoyama A."/>
            <person name="Yamada R."/>
            <person name="Fujisawa T."/>
            <person name="Omata S."/>
            <person name="Shimizu A."/>
            <person name="Tsukatani N."/>
            <person name="Tanikawa S."/>
            <person name="Fujita N."/>
            <person name="Harayama S."/>
        </authorList>
    </citation>
    <scope>NUCLEOTIDE SEQUENCE [LARGE SCALE GENOMIC DNA]</scope>
    <source>
        <strain>PR4 / NBRC 100887</strain>
    </source>
</reference>
<gene>
    <name evidence="1" type="primary">fusA</name>
    <name type="ordered locus">RER_17630</name>
</gene>
<accession>C0ZVT6</accession>
<feature type="chain" id="PRO_1000202309" description="Elongation factor G">
    <location>
        <begin position="1"/>
        <end position="700"/>
    </location>
</feature>
<feature type="domain" description="tr-type G">
    <location>
        <begin position="10"/>
        <end position="286"/>
    </location>
</feature>
<feature type="binding site" evidence="1">
    <location>
        <begin position="19"/>
        <end position="26"/>
    </location>
    <ligand>
        <name>GTP</name>
        <dbReference type="ChEBI" id="CHEBI:37565"/>
    </ligand>
</feature>
<feature type="binding site" evidence="1">
    <location>
        <begin position="83"/>
        <end position="87"/>
    </location>
    <ligand>
        <name>GTP</name>
        <dbReference type="ChEBI" id="CHEBI:37565"/>
    </ligand>
</feature>
<feature type="binding site" evidence="1">
    <location>
        <begin position="137"/>
        <end position="140"/>
    </location>
    <ligand>
        <name>GTP</name>
        <dbReference type="ChEBI" id="CHEBI:37565"/>
    </ligand>
</feature>